<name>ACCA_SYNE7</name>
<organism>
    <name type="scientific">Synechococcus elongatus (strain ATCC 33912 / PCC 7942 / FACHB-805)</name>
    <name type="common">Anacystis nidulans R2</name>
    <dbReference type="NCBI Taxonomy" id="1140"/>
    <lineage>
        <taxon>Bacteria</taxon>
        <taxon>Bacillati</taxon>
        <taxon>Cyanobacteriota</taxon>
        <taxon>Cyanophyceae</taxon>
        <taxon>Synechococcales</taxon>
        <taxon>Synechococcaceae</taxon>
        <taxon>Synechococcus</taxon>
    </lineage>
</organism>
<evidence type="ECO:0000255" key="1">
    <source>
        <dbReference type="HAMAP-Rule" id="MF_00823"/>
    </source>
</evidence>
<evidence type="ECO:0000255" key="2">
    <source>
        <dbReference type="PROSITE-ProRule" id="PRU01137"/>
    </source>
</evidence>
<feature type="chain" id="PRO_0000146782" description="Acetyl-coenzyme A carboxylase carboxyl transferase subunit alpha">
    <location>
        <begin position="1"/>
        <end position="327"/>
    </location>
</feature>
<feature type="domain" description="CoA carboxyltransferase C-terminal" evidence="2">
    <location>
        <begin position="46"/>
        <end position="299"/>
    </location>
</feature>
<keyword id="KW-0067">ATP-binding</keyword>
<keyword id="KW-0963">Cytoplasm</keyword>
<keyword id="KW-0275">Fatty acid biosynthesis</keyword>
<keyword id="KW-0276">Fatty acid metabolism</keyword>
<keyword id="KW-0444">Lipid biosynthesis</keyword>
<keyword id="KW-0443">Lipid metabolism</keyword>
<keyword id="KW-0547">Nucleotide-binding</keyword>
<keyword id="KW-1185">Reference proteome</keyword>
<keyword id="KW-0808">Transferase</keyword>
<protein>
    <recommendedName>
        <fullName evidence="1">Acetyl-coenzyme A carboxylase carboxyl transferase subunit alpha</fullName>
        <shortName evidence="1">ACCase subunit alpha</shortName>
        <shortName evidence="1">Acetyl-CoA carboxylase carboxyltransferase subunit alpha</shortName>
        <ecNumber evidence="1">2.1.3.15</ecNumber>
    </recommendedName>
</protein>
<proteinExistence type="inferred from homology"/>
<comment type="function">
    <text evidence="1">Component of the acetyl coenzyme A carboxylase (ACC) complex. First, biotin carboxylase catalyzes the carboxylation of biotin on its carrier protein (BCCP) and then the CO(2) group is transferred by the carboxyltransferase to acetyl-CoA to form malonyl-CoA.</text>
</comment>
<comment type="catalytic activity">
    <reaction evidence="1">
        <text>N(6)-carboxybiotinyl-L-lysyl-[protein] + acetyl-CoA = N(6)-biotinyl-L-lysyl-[protein] + malonyl-CoA</text>
        <dbReference type="Rhea" id="RHEA:54728"/>
        <dbReference type="Rhea" id="RHEA-COMP:10505"/>
        <dbReference type="Rhea" id="RHEA-COMP:10506"/>
        <dbReference type="ChEBI" id="CHEBI:57288"/>
        <dbReference type="ChEBI" id="CHEBI:57384"/>
        <dbReference type="ChEBI" id="CHEBI:83144"/>
        <dbReference type="ChEBI" id="CHEBI:83145"/>
        <dbReference type="EC" id="2.1.3.15"/>
    </reaction>
</comment>
<comment type="pathway">
    <text evidence="1">Lipid metabolism; malonyl-CoA biosynthesis; malonyl-CoA from acetyl-CoA: step 1/1.</text>
</comment>
<comment type="subunit">
    <text evidence="1">Acetyl-CoA carboxylase is a heterohexamer composed of biotin carboxyl carrier protein (AccB), biotin carboxylase (AccC) and two subunits each of ACCase subunit alpha (AccA) and ACCase subunit beta (AccD).</text>
</comment>
<comment type="subcellular location">
    <subcellularLocation>
        <location evidence="1">Cytoplasm</location>
    </subcellularLocation>
</comment>
<comment type="similarity">
    <text evidence="1">Belongs to the AccA family.</text>
</comment>
<accession>Q54766</accession>
<accession>Q31MU4</accession>
<accession>Q79PG1</accession>
<reference key="1">
    <citation type="submission" date="1997-10" db="EMBL/GenBank/DDBJ databases">
        <title>Genes encoding the alpha subunit of carboxyltransferase of the acetyl-CoA carboxylase complex and GTP cyclohydrolase I from cyanobacterium Synechococcus sp. PCC 7942.</title>
        <authorList>
            <person name="Phung L.T."/>
            <person name="Haselkorn R."/>
        </authorList>
    </citation>
    <scope>NUCLEOTIDE SEQUENCE [GENOMIC DNA]</scope>
</reference>
<reference key="2">
    <citation type="submission" date="2002-06" db="EMBL/GenBank/DDBJ databases">
        <title>Synechococcus elongatus PCC7942 cosmid 6C3.</title>
        <authorList>
            <person name="Holtman C.K."/>
            <person name="Sandoval P."/>
            <person name="Chen Y."/>
            <person name="Socias T."/>
            <person name="Mohler B.J."/>
            <person name="Gonzalez A."/>
            <person name="Salinas I."/>
            <person name="McMurtry S."/>
            <person name="Golden S.S."/>
            <person name="Youderian P."/>
        </authorList>
    </citation>
    <scope>NUCLEOTIDE SEQUENCE [GENOMIC DNA]</scope>
</reference>
<reference key="3">
    <citation type="submission" date="2005-08" db="EMBL/GenBank/DDBJ databases">
        <title>Complete sequence of chromosome 1 of Synechococcus elongatus PCC 7942.</title>
        <authorList>
            <consortium name="US DOE Joint Genome Institute"/>
            <person name="Copeland A."/>
            <person name="Lucas S."/>
            <person name="Lapidus A."/>
            <person name="Barry K."/>
            <person name="Detter J.C."/>
            <person name="Glavina T."/>
            <person name="Hammon N."/>
            <person name="Israni S."/>
            <person name="Pitluck S."/>
            <person name="Schmutz J."/>
            <person name="Larimer F."/>
            <person name="Land M."/>
            <person name="Kyrpides N."/>
            <person name="Lykidis A."/>
            <person name="Golden S."/>
            <person name="Richardson P."/>
        </authorList>
    </citation>
    <scope>NUCLEOTIDE SEQUENCE [LARGE SCALE GENOMIC DNA]</scope>
    <source>
        <strain>ATCC 33912 / PCC 7942 / FACHB-805</strain>
    </source>
</reference>
<dbReference type="EC" id="2.1.3.15" evidence="1"/>
<dbReference type="EMBL" id="U59236">
    <property type="protein sequence ID" value="AAB82040.1"/>
    <property type="molecule type" value="Genomic_DNA"/>
</dbReference>
<dbReference type="EMBL" id="AY120852">
    <property type="protein sequence ID" value="AAM82646.1"/>
    <property type="molecule type" value="Genomic_DNA"/>
</dbReference>
<dbReference type="EMBL" id="CP000100">
    <property type="protein sequence ID" value="ABB57625.1"/>
    <property type="molecule type" value="Genomic_DNA"/>
</dbReference>
<dbReference type="RefSeq" id="WP_011242365.1">
    <property type="nucleotide sequence ID" value="NZ_JACJTX010000004.1"/>
</dbReference>
<dbReference type="SMR" id="Q54766"/>
<dbReference type="STRING" id="1140.Synpcc7942_1595"/>
<dbReference type="PaxDb" id="1140-Synpcc7942_1595"/>
<dbReference type="KEGG" id="syf:Synpcc7942_1595"/>
<dbReference type="eggNOG" id="COG0825">
    <property type="taxonomic scope" value="Bacteria"/>
</dbReference>
<dbReference type="HOGENOM" id="CLU_015486_0_2_3"/>
<dbReference type="OrthoDB" id="9808023at2"/>
<dbReference type="BioCyc" id="SYNEL:SYNPCC7942_1595-MONOMER"/>
<dbReference type="UniPathway" id="UPA00655">
    <property type="reaction ID" value="UER00711"/>
</dbReference>
<dbReference type="Proteomes" id="UP000889800">
    <property type="component" value="Chromosome"/>
</dbReference>
<dbReference type="GO" id="GO:0009317">
    <property type="term" value="C:acetyl-CoA carboxylase complex"/>
    <property type="evidence" value="ECO:0007669"/>
    <property type="project" value="InterPro"/>
</dbReference>
<dbReference type="GO" id="GO:0003989">
    <property type="term" value="F:acetyl-CoA carboxylase activity"/>
    <property type="evidence" value="ECO:0007669"/>
    <property type="project" value="InterPro"/>
</dbReference>
<dbReference type="GO" id="GO:0005524">
    <property type="term" value="F:ATP binding"/>
    <property type="evidence" value="ECO:0007669"/>
    <property type="project" value="UniProtKB-KW"/>
</dbReference>
<dbReference type="GO" id="GO:0016743">
    <property type="term" value="F:carboxyl- or carbamoyltransferase activity"/>
    <property type="evidence" value="ECO:0007669"/>
    <property type="project" value="UniProtKB-UniRule"/>
</dbReference>
<dbReference type="GO" id="GO:0006633">
    <property type="term" value="P:fatty acid biosynthetic process"/>
    <property type="evidence" value="ECO:0007669"/>
    <property type="project" value="UniProtKB-KW"/>
</dbReference>
<dbReference type="GO" id="GO:2001295">
    <property type="term" value="P:malonyl-CoA biosynthetic process"/>
    <property type="evidence" value="ECO:0007669"/>
    <property type="project" value="UniProtKB-UniRule"/>
</dbReference>
<dbReference type="Gene3D" id="3.90.226.10">
    <property type="entry name" value="2-enoyl-CoA Hydratase, Chain A, domain 1"/>
    <property type="match status" value="1"/>
</dbReference>
<dbReference type="HAMAP" id="MF_00823">
    <property type="entry name" value="AcetylCoA_CT_alpha"/>
    <property type="match status" value="1"/>
</dbReference>
<dbReference type="InterPro" id="IPR001095">
    <property type="entry name" value="Acetyl_CoA_COase_a_su"/>
</dbReference>
<dbReference type="InterPro" id="IPR029045">
    <property type="entry name" value="ClpP/crotonase-like_dom_sf"/>
</dbReference>
<dbReference type="InterPro" id="IPR011763">
    <property type="entry name" value="COA_CT_C"/>
</dbReference>
<dbReference type="NCBIfam" id="TIGR00513">
    <property type="entry name" value="accA"/>
    <property type="match status" value="1"/>
</dbReference>
<dbReference type="NCBIfam" id="NF041504">
    <property type="entry name" value="AccA_sub"/>
    <property type="match status" value="1"/>
</dbReference>
<dbReference type="NCBIfam" id="NF004344">
    <property type="entry name" value="PRK05724.1"/>
    <property type="match status" value="1"/>
</dbReference>
<dbReference type="PANTHER" id="PTHR42853">
    <property type="entry name" value="ACETYL-COENZYME A CARBOXYLASE CARBOXYL TRANSFERASE SUBUNIT ALPHA"/>
    <property type="match status" value="1"/>
</dbReference>
<dbReference type="PANTHER" id="PTHR42853:SF3">
    <property type="entry name" value="ACETYL-COENZYME A CARBOXYLASE CARBOXYL TRANSFERASE SUBUNIT ALPHA, CHLOROPLASTIC"/>
    <property type="match status" value="1"/>
</dbReference>
<dbReference type="Pfam" id="PF03255">
    <property type="entry name" value="ACCA"/>
    <property type="match status" value="1"/>
</dbReference>
<dbReference type="PRINTS" id="PR01069">
    <property type="entry name" value="ACCCTRFRASEA"/>
</dbReference>
<dbReference type="SUPFAM" id="SSF52096">
    <property type="entry name" value="ClpP/crotonase"/>
    <property type="match status" value="1"/>
</dbReference>
<dbReference type="PROSITE" id="PS50989">
    <property type="entry name" value="COA_CT_CTER"/>
    <property type="match status" value="1"/>
</dbReference>
<gene>
    <name evidence="1" type="primary">accA</name>
    <name type="ordered locus">Synpcc7942_1595</name>
    <name type="ORF">sec0029</name>
</gene>
<sequence>MAAPVTKKPILLEFEKPLVELEERITQIRTLAADNQVDVSGQIQQLEARAIQLRREIFSNLSPAQRIQVARHPRRPSTLDYIQAISDEWIELHGDRNGSDDLALVGGVGALDGQPVVFLGHQKGRDTKDNVLRNFGMASPGGYRKALRLMEHADRFGMPILTFIDTPGAYAGVSAEELGQGEAIAVNLREMFRFSVPILCTVIGEGGSGGALGIGVGDRLLMFEHSVYTVASPEACASILWRDAGKAAQAAEALKITARDLKQLGILDEIITEPLGGAHSAPLETAQSLRQVLLRHLKDLQALSPAQLREQRYQKFRQLGVFLESSD</sequence>